<gene>
    <name type="primary">OR51B5</name>
</gene>
<dbReference type="EMBL" id="AF137396">
    <property type="protein sequence ID" value="AAG41683.1"/>
    <property type="molecule type" value="Genomic_DNA"/>
</dbReference>
<dbReference type="EMBL" id="AC104389">
    <property type="status" value="NOT_ANNOTATED_CDS"/>
    <property type="molecule type" value="Genomic_DNA"/>
</dbReference>
<dbReference type="EMBL" id="CH471064">
    <property type="protein sequence ID" value="EAW68799.1"/>
    <property type="molecule type" value="Genomic_DNA"/>
</dbReference>
<dbReference type="EMBL" id="BC136707">
    <property type="protein sequence ID" value="AAI36708.1"/>
    <property type="molecule type" value="mRNA"/>
</dbReference>
<dbReference type="EMBL" id="BC136708">
    <property type="protein sequence ID" value="AAI36709.1"/>
    <property type="molecule type" value="mRNA"/>
</dbReference>
<dbReference type="EMBL" id="BK004430">
    <property type="protein sequence ID" value="DAA04828.1"/>
    <property type="molecule type" value="Genomic_DNA"/>
</dbReference>
<dbReference type="CCDS" id="CCDS31378.1"/>
<dbReference type="RefSeq" id="NP_001005567.2">
    <property type="nucleotide sequence ID" value="NM_001005567.3"/>
</dbReference>
<dbReference type="RefSeq" id="NP_001382181.1">
    <property type="nucleotide sequence ID" value="NM_001395252.1"/>
</dbReference>
<dbReference type="SMR" id="Q9H339"/>
<dbReference type="BioGRID" id="129409">
    <property type="interactions" value="2"/>
</dbReference>
<dbReference type="FunCoup" id="Q9H339">
    <property type="interactions" value="587"/>
</dbReference>
<dbReference type="IntAct" id="Q9H339">
    <property type="interactions" value="1"/>
</dbReference>
<dbReference type="STRING" id="9606.ENSP00000300773"/>
<dbReference type="iPTMnet" id="Q9H339"/>
<dbReference type="PhosphoSitePlus" id="Q9H339"/>
<dbReference type="BioMuta" id="OR51B5"/>
<dbReference type="DMDM" id="296439245"/>
<dbReference type="PaxDb" id="9606-ENSP00000300773"/>
<dbReference type="Antibodypedia" id="78945">
    <property type="antibodies" value="60 antibodies from 19 providers"/>
</dbReference>
<dbReference type="DNASU" id="282763"/>
<dbReference type="Ensembl" id="ENST00000300773.3">
    <property type="protein sequence ID" value="ENSP00000300773.2"/>
    <property type="gene ID" value="ENSG00000167355.8"/>
</dbReference>
<dbReference type="GeneID" id="282763"/>
<dbReference type="KEGG" id="hsa:282763"/>
<dbReference type="MANE-Select" id="ENST00000300773.3">
    <property type="protein sequence ID" value="ENSP00000300773.2"/>
    <property type="RefSeq nucleotide sequence ID" value="NM_001395252.1"/>
    <property type="RefSeq protein sequence ID" value="NP_001382181.1"/>
</dbReference>
<dbReference type="UCSC" id="uc057yhn.1">
    <property type="organism name" value="human"/>
</dbReference>
<dbReference type="AGR" id="HGNC:19599"/>
<dbReference type="CTD" id="282763"/>
<dbReference type="DisGeNET" id="282763"/>
<dbReference type="GeneCards" id="OR51B5"/>
<dbReference type="HGNC" id="HGNC:19599">
    <property type="gene designation" value="OR51B5"/>
</dbReference>
<dbReference type="HPA" id="ENSG00000167355">
    <property type="expression patterns" value="Not detected"/>
</dbReference>
<dbReference type="neXtProt" id="NX_Q9H339"/>
<dbReference type="OpenTargets" id="ENSG00000167355"/>
<dbReference type="PharmGKB" id="PA134907440"/>
<dbReference type="VEuPathDB" id="HostDB:ENSG00000167355"/>
<dbReference type="eggNOG" id="ENOG502TAGS">
    <property type="taxonomic scope" value="Eukaryota"/>
</dbReference>
<dbReference type="GeneTree" id="ENSGT01130000278299"/>
<dbReference type="HOGENOM" id="CLU_012526_0_0_1"/>
<dbReference type="InParanoid" id="Q9H339"/>
<dbReference type="OMA" id="HIVHLTM"/>
<dbReference type="OrthoDB" id="9444602at2759"/>
<dbReference type="PAN-GO" id="Q9H339">
    <property type="GO annotations" value="2 GO annotations based on evolutionary models"/>
</dbReference>
<dbReference type="PhylomeDB" id="Q9H339"/>
<dbReference type="TreeFam" id="TF342735"/>
<dbReference type="PathwayCommons" id="Q9H339"/>
<dbReference type="Reactome" id="R-HSA-381753">
    <property type="pathway name" value="Olfactory Signaling Pathway"/>
</dbReference>
<dbReference type="Reactome" id="R-HSA-9752946">
    <property type="pathway name" value="Expression and translocation of olfactory receptors"/>
</dbReference>
<dbReference type="BioGRID-ORCS" id="282763">
    <property type="hits" value="8 hits in 665 CRISPR screens"/>
</dbReference>
<dbReference type="ChiTaRS" id="OR51B5">
    <property type="organism name" value="human"/>
</dbReference>
<dbReference type="GeneWiki" id="OR51B5"/>
<dbReference type="GenomeRNAi" id="282763"/>
<dbReference type="Pharos" id="Q9H339">
    <property type="development level" value="Tdark"/>
</dbReference>
<dbReference type="PRO" id="PR:Q9H339"/>
<dbReference type="Proteomes" id="UP000005640">
    <property type="component" value="Chromosome 11"/>
</dbReference>
<dbReference type="RNAct" id="Q9H339">
    <property type="molecule type" value="protein"/>
</dbReference>
<dbReference type="Bgee" id="ENSG00000167355">
    <property type="expression patterns" value="Expressed in primordial germ cell in gonad and 87 other cell types or tissues"/>
</dbReference>
<dbReference type="ExpressionAtlas" id="Q9H339">
    <property type="expression patterns" value="baseline and differential"/>
</dbReference>
<dbReference type="GO" id="GO:0016020">
    <property type="term" value="C:membrane"/>
    <property type="evidence" value="ECO:0000303"/>
    <property type="project" value="UniProtKB"/>
</dbReference>
<dbReference type="GO" id="GO:0005886">
    <property type="term" value="C:plasma membrane"/>
    <property type="evidence" value="ECO:0000318"/>
    <property type="project" value="GO_Central"/>
</dbReference>
<dbReference type="GO" id="GO:0004930">
    <property type="term" value="F:G protein-coupled receptor activity"/>
    <property type="evidence" value="ECO:0007669"/>
    <property type="project" value="UniProtKB-KW"/>
</dbReference>
<dbReference type="GO" id="GO:0004984">
    <property type="term" value="F:olfactory receptor activity"/>
    <property type="evidence" value="ECO:0000318"/>
    <property type="project" value="GO_Central"/>
</dbReference>
<dbReference type="GO" id="GO:0007608">
    <property type="term" value="P:sensory perception of smell"/>
    <property type="evidence" value="ECO:0000303"/>
    <property type="project" value="UniProtKB"/>
</dbReference>
<dbReference type="CDD" id="cd15222">
    <property type="entry name" value="7tmA_OR51-like"/>
    <property type="match status" value="1"/>
</dbReference>
<dbReference type="FunFam" id="1.20.1070.10:FF:000002">
    <property type="entry name" value="Olfactory receptor"/>
    <property type="match status" value="1"/>
</dbReference>
<dbReference type="Gene3D" id="1.20.1070.10">
    <property type="entry name" value="Rhodopsin 7-helix transmembrane proteins"/>
    <property type="match status" value="1"/>
</dbReference>
<dbReference type="InterPro" id="IPR000276">
    <property type="entry name" value="GPCR_Rhodpsn"/>
</dbReference>
<dbReference type="InterPro" id="IPR017452">
    <property type="entry name" value="GPCR_Rhodpsn_7TM"/>
</dbReference>
<dbReference type="InterPro" id="IPR000725">
    <property type="entry name" value="Olfact_rcpt"/>
</dbReference>
<dbReference type="InterPro" id="IPR050402">
    <property type="entry name" value="OR51/52/56-like"/>
</dbReference>
<dbReference type="PANTHER" id="PTHR26450:SF76">
    <property type="entry name" value="OLFACTORY RECEPTOR 51B5"/>
    <property type="match status" value="1"/>
</dbReference>
<dbReference type="PANTHER" id="PTHR26450">
    <property type="entry name" value="OLFACTORY RECEPTOR 56B1-RELATED"/>
    <property type="match status" value="1"/>
</dbReference>
<dbReference type="Pfam" id="PF13853">
    <property type="entry name" value="7tm_4"/>
    <property type="match status" value="1"/>
</dbReference>
<dbReference type="PRINTS" id="PR00237">
    <property type="entry name" value="GPCRRHODOPSN"/>
</dbReference>
<dbReference type="PRINTS" id="PR00245">
    <property type="entry name" value="OLFACTORYR"/>
</dbReference>
<dbReference type="SUPFAM" id="SSF81321">
    <property type="entry name" value="Family A G protein-coupled receptor-like"/>
    <property type="match status" value="1"/>
</dbReference>
<dbReference type="PROSITE" id="PS00237">
    <property type="entry name" value="G_PROTEIN_RECEP_F1_1"/>
    <property type="match status" value="1"/>
</dbReference>
<dbReference type="PROSITE" id="PS50262">
    <property type="entry name" value="G_PROTEIN_RECEP_F1_2"/>
    <property type="match status" value="1"/>
</dbReference>
<feature type="chain" id="PRO_0000150747" description="Olfactory receptor 51B5">
    <location>
        <begin position="1"/>
        <end position="312"/>
    </location>
</feature>
<feature type="topological domain" description="Extracellular" evidence="1">
    <location>
        <begin position="1"/>
        <end position="23"/>
    </location>
</feature>
<feature type="transmembrane region" description="Helical; Name=1" evidence="1">
    <location>
        <begin position="24"/>
        <end position="44"/>
    </location>
</feature>
<feature type="topological domain" description="Cytoplasmic" evidence="1">
    <location>
        <begin position="45"/>
        <end position="52"/>
    </location>
</feature>
<feature type="transmembrane region" description="Helical; Name=2" evidence="1">
    <location>
        <begin position="53"/>
        <end position="73"/>
    </location>
</feature>
<feature type="topological domain" description="Extracellular" evidence="1">
    <location>
        <begin position="74"/>
        <end position="97"/>
    </location>
</feature>
<feature type="transmembrane region" description="Helical; Name=3" evidence="1">
    <location>
        <begin position="98"/>
        <end position="118"/>
    </location>
</feature>
<feature type="topological domain" description="Cytoplasmic" evidence="1">
    <location>
        <begin position="119"/>
        <end position="137"/>
    </location>
</feature>
<feature type="transmembrane region" description="Helical; Name=4" evidence="1">
    <location>
        <begin position="138"/>
        <end position="158"/>
    </location>
</feature>
<feature type="topological domain" description="Extracellular" evidence="1">
    <location>
        <begin position="159"/>
        <end position="194"/>
    </location>
</feature>
<feature type="transmembrane region" description="Helical; Name=5" evidence="1">
    <location>
        <begin position="195"/>
        <end position="215"/>
    </location>
</feature>
<feature type="topological domain" description="Cytoplasmic" evidence="1">
    <location>
        <begin position="216"/>
        <end position="235"/>
    </location>
</feature>
<feature type="transmembrane region" description="Helical; Name=6" evidence="1">
    <location>
        <begin position="236"/>
        <end position="256"/>
    </location>
</feature>
<feature type="topological domain" description="Extracellular" evidence="1">
    <location>
        <begin position="257"/>
        <end position="271"/>
    </location>
</feature>
<feature type="transmembrane region" description="Helical; Name=7" evidence="1">
    <location>
        <begin position="272"/>
        <end position="292"/>
    </location>
</feature>
<feature type="topological domain" description="Cytoplasmic" evidence="1">
    <location>
        <begin position="293"/>
        <end position="312"/>
    </location>
</feature>
<feature type="disulfide bond" evidence="2">
    <location>
        <begin position="95"/>
        <end position="187"/>
    </location>
</feature>
<feature type="sequence variant" id="VAR_053307" description="In dbSNP:rs11036913." evidence="3 4 5">
    <original>G</original>
    <variation>S</variation>
    <location>
        <position position="5"/>
    </location>
</feature>
<feature type="sequence variant" id="VAR_062078" description="In dbSNP:rs57273781.">
    <original>T</original>
    <variation>K</variation>
    <location>
        <position position="78"/>
    </location>
</feature>
<feature type="sequence variant" id="VAR_062079" description="In dbSNP:rs57900141.">
    <original>R</original>
    <variation>G</variation>
    <location>
        <position position="88"/>
    </location>
</feature>
<feature type="sequence variant" id="VAR_053308" description="In dbSNP:rs11036912.">
    <original>I</original>
    <variation>T</variation>
    <location>
        <position position="102"/>
    </location>
</feature>
<feature type="sequence variant" id="VAR_053309" description="In dbSNP:rs12273630.">
    <original>V</original>
    <variation>I</variation>
    <location>
        <position position="154"/>
    </location>
</feature>
<feature type="sequence variant" id="VAR_053310" description="In dbSNP:rs4910551.">
    <original>P</original>
    <variation>L</variation>
    <location>
        <position position="160"/>
    </location>
</feature>
<feature type="sequence variant" id="VAR_053311" description="In dbSNP:rs7120319.">
    <original>L</original>
    <variation>F</variation>
    <location>
        <position position="220"/>
    </location>
</feature>
<accession>Q9H339</accession>
<accession>B2RN59</accession>
<sequence length="312" mass="35241">MSSSGSSHPFLLTGFPGLEEAHHWISVFFLFMYISILFGNGTLLLLIKEDHNLHEPMYFFLAMLAATDLGLALTTMPTVLGVLWLDHREIGSAACFSQAYFIHSLSFLESGILLAMAYDRFIAICNPLRYTSVLTNTRVVKIGLGVLMRGFVSVVPPIRPLYFFLYCHSHVLSHAFCLHQDVIKLACADTTFNRLYPAVLVVFIFVLDYLIIFISYVLILKTVLSIASREERAKALITCVSHICCVLVFYVTVIGLSLIHRFGKQVPHIVHLIMSYAYFLFPPLMNPITYSVKTKQIQNAILHLFTTHRIGT</sequence>
<reference key="1">
    <citation type="journal article" date="2000" name="Proc. Natl. Acad. Sci. U.S.A.">
        <title>Comparative structural and functional analysis of the olfactory receptor genes flanking the human and mouse beta-globin gene clusters.</title>
        <authorList>
            <person name="Bulger M."/>
            <person name="Bender M.A."/>
            <person name="van Doorninck J.H."/>
            <person name="Wertman B."/>
            <person name="Farrell C.M."/>
            <person name="Felsenfeld G."/>
            <person name="Groudine M."/>
            <person name="Hardison R."/>
        </authorList>
    </citation>
    <scope>NUCLEOTIDE SEQUENCE [GENOMIC DNA]</scope>
    <scope>VARIANT SER-5</scope>
</reference>
<reference key="2">
    <citation type="journal article" date="2006" name="Nature">
        <title>Human chromosome 11 DNA sequence and analysis including novel gene identification.</title>
        <authorList>
            <person name="Taylor T.D."/>
            <person name="Noguchi H."/>
            <person name="Totoki Y."/>
            <person name="Toyoda A."/>
            <person name="Kuroki Y."/>
            <person name="Dewar K."/>
            <person name="Lloyd C."/>
            <person name="Itoh T."/>
            <person name="Takeda T."/>
            <person name="Kim D.-W."/>
            <person name="She X."/>
            <person name="Barlow K.F."/>
            <person name="Bloom T."/>
            <person name="Bruford E."/>
            <person name="Chang J.L."/>
            <person name="Cuomo C.A."/>
            <person name="Eichler E."/>
            <person name="FitzGerald M.G."/>
            <person name="Jaffe D.B."/>
            <person name="LaButti K."/>
            <person name="Nicol R."/>
            <person name="Park H.-S."/>
            <person name="Seaman C."/>
            <person name="Sougnez C."/>
            <person name="Yang X."/>
            <person name="Zimmer A.R."/>
            <person name="Zody M.C."/>
            <person name="Birren B.W."/>
            <person name="Nusbaum C."/>
            <person name="Fujiyama A."/>
            <person name="Hattori M."/>
            <person name="Rogers J."/>
            <person name="Lander E.S."/>
            <person name="Sakaki Y."/>
        </authorList>
    </citation>
    <scope>NUCLEOTIDE SEQUENCE [LARGE SCALE GENOMIC DNA]</scope>
</reference>
<reference key="3">
    <citation type="submission" date="2005-09" db="EMBL/GenBank/DDBJ databases">
        <authorList>
            <person name="Mural R.J."/>
            <person name="Istrail S."/>
            <person name="Sutton G.G."/>
            <person name="Florea L."/>
            <person name="Halpern A.L."/>
            <person name="Mobarry C.M."/>
            <person name="Lippert R."/>
            <person name="Walenz B."/>
            <person name="Shatkay H."/>
            <person name="Dew I."/>
            <person name="Miller J.R."/>
            <person name="Flanigan M.J."/>
            <person name="Edwards N.J."/>
            <person name="Bolanos R."/>
            <person name="Fasulo D."/>
            <person name="Halldorsson B.V."/>
            <person name="Hannenhalli S."/>
            <person name="Turner R."/>
            <person name="Yooseph S."/>
            <person name="Lu F."/>
            <person name="Nusskern D.R."/>
            <person name="Shue B.C."/>
            <person name="Zheng X.H."/>
            <person name="Zhong F."/>
            <person name="Delcher A.L."/>
            <person name="Huson D.H."/>
            <person name="Kravitz S.A."/>
            <person name="Mouchard L."/>
            <person name="Reinert K."/>
            <person name="Remington K.A."/>
            <person name="Clark A.G."/>
            <person name="Waterman M.S."/>
            <person name="Eichler E.E."/>
            <person name="Adams M.D."/>
            <person name="Hunkapiller M.W."/>
            <person name="Myers E.W."/>
            <person name="Venter J.C."/>
        </authorList>
    </citation>
    <scope>NUCLEOTIDE SEQUENCE [LARGE SCALE GENOMIC DNA]</scope>
    <scope>VARIANT SER-5</scope>
</reference>
<reference key="4">
    <citation type="journal article" date="2004" name="Genome Res.">
        <title>The status, quality, and expansion of the NIH full-length cDNA project: the Mammalian Gene Collection (MGC).</title>
        <authorList>
            <consortium name="The MGC Project Team"/>
        </authorList>
    </citation>
    <scope>NUCLEOTIDE SEQUENCE [LARGE SCALE MRNA]</scope>
    <scope>VARIANT SER-5</scope>
    <source>
        <tissue>Brain</tissue>
    </source>
</reference>
<reference key="5">
    <citation type="journal article" date="2004" name="Proc. Natl. Acad. Sci. U.S.A.">
        <title>The human olfactory receptor gene family.</title>
        <authorList>
            <person name="Malnic B."/>
            <person name="Godfrey P.A."/>
            <person name="Buck L.B."/>
        </authorList>
    </citation>
    <scope>IDENTIFICATION</scope>
</reference>
<reference key="6">
    <citation type="journal article" date="2004" name="Proc. Natl. Acad. Sci. U.S.A.">
        <authorList>
            <person name="Malnic B."/>
            <person name="Godfrey P.A."/>
            <person name="Buck L.B."/>
        </authorList>
    </citation>
    <scope>ERRATUM OF PUBMED:14983052</scope>
</reference>
<evidence type="ECO:0000255" key="1"/>
<evidence type="ECO:0000255" key="2">
    <source>
        <dbReference type="PROSITE-ProRule" id="PRU00521"/>
    </source>
</evidence>
<evidence type="ECO:0000269" key="3">
    <source>
    </source>
</evidence>
<evidence type="ECO:0000269" key="4">
    <source>
    </source>
</evidence>
<evidence type="ECO:0000269" key="5">
    <source ref="3"/>
</evidence>
<evidence type="ECO:0000305" key="6"/>
<keyword id="KW-1003">Cell membrane</keyword>
<keyword id="KW-1015">Disulfide bond</keyword>
<keyword id="KW-0297">G-protein coupled receptor</keyword>
<keyword id="KW-0472">Membrane</keyword>
<keyword id="KW-0552">Olfaction</keyword>
<keyword id="KW-0675">Receptor</keyword>
<keyword id="KW-1185">Reference proteome</keyword>
<keyword id="KW-0716">Sensory transduction</keyword>
<keyword id="KW-0807">Transducer</keyword>
<keyword id="KW-0812">Transmembrane</keyword>
<keyword id="KW-1133">Transmembrane helix</keyword>
<proteinExistence type="evidence at transcript level"/>
<organism>
    <name type="scientific">Homo sapiens</name>
    <name type="common">Human</name>
    <dbReference type="NCBI Taxonomy" id="9606"/>
    <lineage>
        <taxon>Eukaryota</taxon>
        <taxon>Metazoa</taxon>
        <taxon>Chordata</taxon>
        <taxon>Craniata</taxon>
        <taxon>Vertebrata</taxon>
        <taxon>Euteleostomi</taxon>
        <taxon>Mammalia</taxon>
        <taxon>Eutheria</taxon>
        <taxon>Euarchontoglires</taxon>
        <taxon>Primates</taxon>
        <taxon>Haplorrhini</taxon>
        <taxon>Catarrhini</taxon>
        <taxon>Hominidae</taxon>
        <taxon>Homo</taxon>
    </lineage>
</organism>
<name>O51B5_HUMAN</name>
<comment type="function">
    <text evidence="6">Odorant receptor.</text>
</comment>
<comment type="subcellular location">
    <subcellularLocation>
        <location>Cell membrane</location>
        <topology>Multi-pass membrane protein</topology>
    </subcellularLocation>
</comment>
<comment type="similarity">
    <text evidence="2">Belongs to the G-protein coupled receptor 1 family.</text>
</comment>
<comment type="online information" name="Human Olfactory Receptor Data Exploratorium (HORDE)">
    <link uri="http://genome.weizmann.ac.il/horde/card/index/symbol:OR51B5"/>
</comment>
<protein>
    <recommendedName>
        <fullName>Olfactory receptor 51B5</fullName>
    </recommendedName>
    <alternativeName>
        <fullName>Odorant receptor HOR5'beta5</fullName>
    </alternativeName>
    <alternativeName>
        <fullName>Olfactory receptor OR11-37</fullName>
    </alternativeName>
</protein>